<keyword id="KW-0007">Acetylation</keyword>
<keyword id="KW-0066">ATP synthesis</keyword>
<keyword id="KW-0138">CF(0)</keyword>
<keyword id="KW-0375">Hydrogen ion transport</keyword>
<keyword id="KW-0406">Ion transport</keyword>
<keyword id="KW-0472">Membrane</keyword>
<keyword id="KW-0496">Mitochondrion</keyword>
<keyword id="KW-0812">Transmembrane</keyword>
<keyword id="KW-1133">Transmembrane helix</keyword>
<keyword id="KW-0813">Transport</keyword>
<feature type="chain" id="PRO_0000195520" description="ATP synthase protein 8">
    <location>
        <begin position="1"/>
        <end position="69"/>
    </location>
</feature>
<feature type="transmembrane region" description="Helical" evidence="4">
    <location>
        <begin position="8"/>
        <end position="24"/>
    </location>
</feature>
<feature type="modified residue" description="N6-acetyllysine; alternate" evidence="3">
    <location>
        <position position="55"/>
    </location>
</feature>
<feature type="modified residue" description="N6-succinyllysine; alternate" evidence="3">
    <location>
        <position position="55"/>
    </location>
</feature>
<feature type="modified residue" description="N6-acetyllysine" evidence="3">
    <location>
        <position position="58"/>
    </location>
</feature>
<name>ATP8_DIDVI</name>
<dbReference type="EMBL" id="Z29573">
    <property type="protein sequence ID" value="CAA82681.1"/>
    <property type="molecule type" value="Genomic_DNA"/>
</dbReference>
<dbReference type="PIR" id="S47874">
    <property type="entry name" value="S47874"/>
</dbReference>
<dbReference type="RefSeq" id="NP_007099.1">
    <property type="nucleotide sequence ID" value="NC_001610.1"/>
</dbReference>
<dbReference type="SMR" id="P41314"/>
<dbReference type="GeneID" id="807784"/>
<dbReference type="CTD" id="4509"/>
<dbReference type="GO" id="GO:0031966">
    <property type="term" value="C:mitochondrial membrane"/>
    <property type="evidence" value="ECO:0007669"/>
    <property type="project" value="UniProtKB-SubCell"/>
</dbReference>
<dbReference type="GO" id="GO:0045259">
    <property type="term" value="C:proton-transporting ATP synthase complex"/>
    <property type="evidence" value="ECO:0000250"/>
    <property type="project" value="UniProtKB"/>
</dbReference>
<dbReference type="GO" id="GO:0015078">
    <property type="term" value="F:proton transmembrane transporter activity"/>
    <property type="evidence" value="ECO:0007669"/>
    <property type="project" value="InterPro"/>
</dbReference>
<dbReference type="GO" id="GO:0015986">
    <property type="term" value="P:proton motive force-driven ATP synthesis"/>
    <property type="evidence" value="ECO:0007669"/>
    <property type="project" value="InterPro"/>
</dbReference>
<dbReference type="InterPro" id="IPR039017">
    <property type="entry name" value="ATP8_mammal"/>
</dbReference>
<dbReference type="InterPro" id="IPR001421">
    <property type="entry name" value="ATP8_metazoa"/>
</dbReference>
<dbReference type="PANTHER" id="PTHR13722">
    <property type="entry name" value="ATP SYNTHASE PROTEIN 8"/>
    <property type="match status" value="1"/>
</dbReference>
<dbReference type="PANTHER" id="PTHR13722:SF0">
    <property type="entry name" value="ATP SYNTHASE PROTEIN 8"/>
    <property type="match status" value="1"/>
</dbReference>
<dbReference type="Pfam" id="PF00895">
    <property type="entry name" value="ATP-synt_8"/>
    <property type="match status" value="1"/>
</dbReference>
<evidence type="ECO:0000250" key="1"/>
<evidence type="ECO:0000250" key="2">
    <source>
        <dbReference type="UniProtKB" id="P03928"/>
    </source>
</evidence>
<evidence type="ECO:0000250" key="3">
    <source>
        <dbReference type="UniProtKB" id="P03930"/>
    </source>
</evidence>
<evidence type="ECO:0000255" key="4"/>
<evidence type="ECO:0000305" key="5"/>
<gene>
    <name type="primary">MT-ATP8</name>
    <name type="synonym">ATP8</name>
    <name type="synonym">ATPASE8</name>
    <name type="synonym">MTATP8</name>
</gene>
<comment type="function">
    <text evidence="1">Mitochondrial membrane ATP synthase (F(1)F(0) ATP synthase or Complex V) produces ATP from ADP in the presence of a proton gradient across the membrane which is generated by electron transport complexes of the respiratory chain. F-type ATPases consist of two structural domains, F(1) - containing the extramembraneous catalytic core and F(0) - containing the membrane proton channel, linked together by a central stalk and a peripheral stalk. During catalysis, ATP synthesis in the catalytic domain of F(1) is coupled via a rotary mechanism of the central stalk subunits to proton translocation. Part of the complex F(0) domain. Minor subunit located with subunit a in the membrane (By similarity).</text>
</comment>
<comment type="subunit">
    <text evidence="2">F-type ATPases have 2 components, CF(1) - the catalytic core - and CF(0) - the membrane proton channel. Component of an ATP synthase complex composed of ATP5PB, ATP5MC1, ATP5F1E, ATP5PD, ATP5ME, ATP5PF, ATP5MF, MT-ATP6, MT-ATP8, ATP5F1A, ATP5F1B, ATP5F1D, ATP5F1C, ATP5PO, ATP5MG, ATP5MK and ATP5MJ (By similarity). Interacts with PRICKLE3 (By similarity).</text>
</comment>
<comment type="subcellular location">
    <subcellularLocation>
        <location>Mitochondrion membrane</location>
        <topology>Single-pass membrane protein</topology>
    </subcellularLocation>
</comment>
<comment type="similarity">
    <text evidence="5">Belongs to the ATPase protein 8 family.</text>
</comment>
<proteinExistence type="inferred from homology"/>
<reference key="1">
    <citation type="journal article" date="1994" name="Genetics">
        <title>The marsupial mitochondrial genome and the evolution of placental mammals.</title>
        <authorList>
            <person name="Janke A."/>
            <person name="Feldmaier-Fuchs G."/>
            <person name="Thomas K."/>
            <person name="von Haeseler A."/>
            <person name="Paabo S."/>
        </authorList>
    </citation>
    <scope>NUCLEOTIDE SEQUENCE [GENOMIC DNA]</scope>
    <source>
        <tissue>Liver</tissue>
    </source>
</reference>
<sequence length="69" mass="8209">MPQLNTSTWTLTISLMIISLFCIYQLKMMNQTLIQITPSTEQSKLTKHTLPWEKKWTKIYLPHSSHQQF</sequence>
<geneLocation type="mitochondrion"/>
<accession>P41314</accession>
<organism>
    <name type="scientific">Didelphis virginiana</name>
    <name type="common">North American opossum</name>
    <name type="synonym">Didelphis marsupialis virginiana</name>
    <dbReference type="NCBI Taxonomy" id="9267"/>
    <lineage>
        <taxon>Eukaryota</taxon>
        <taxon>Metazoa</taxon>
        <taxon>Chordata</taxon>
        <taxon>Craniata</taxon>
        <taxon>Vertebrata</taxon>
        <taxon>Euteleostomi</taxon>
        <taxon>Mammalia</taxon>
        <taxon>Metatheria</taxon>
        <taxon>Didelphimorphia</taxon>
        <taxon>Didelphidae</taxon>
        <taxon>Didelphis</taxon>
    </lineage>
</organism>
<protein>
    <recommendedName>
        <fullName>ATP synthase protein 8</fullName>
    </recommendedName>
    <alternativeName>
        <fullName>A6L</fullName>
    </alternativeName>
    <alternativeName>
        <fullName>F-ATPase subunit 8</fullName>
    </alternativeName>
</protein>